<keyword id="KW-0007">Acetylation</keyword>
<keyword id="KW-0113">Calvin cycle</keyword>
<keyword id="KW-0120">Carbon dioxide fixation</keyword>
<keyword id="KW-0150">Chloroplast</keyword>
<keyword id="KW-1015">Disulfide bond</keyword>
<keyword id="KW-0456">Lyase</keyword>
<keyword id="KW-0460">Magnesium</keyword>
<keyword id="KW-0479">Metal-binding</keyword>
<keyword id="KW-0488">Methylation</keyword>
<keyword id="KW-0503">Monooxygenase</keyword>
<keyword id="KW-0560">Oxidoreductase</keyword>
<keyword id="KW-0601">Photorespiration</keyword>
<keyword id="KW-0602">Photosynthesis</keyword>
<keyword id="KW-0934">Plastid</keyword>
<dbReference type="EC" id="4.1.1.39" evidence="1"/>
<dbReference type="EMBL" id="M62570">
    <property type="protein sequence ID" value="AAA84620.1"/>
    <property type="molecule type" value="Genomic_DNA"/>
</dbReference>
<dbReference type="SMR" id="P46820"/>
<dbReference type="GO" id="GO:0009507">
    <property type="term" value="C:chloroplast"/>
    <property type="evidence" value="ECO:0007669"/>
    <property type="project" value="UniProtKB-SubCell"/>
</dbReference>
<dbReference type="GO" id="GO:0000287">
    <property type="term" value="F:magnesium ion binding"/>
    <property type="evidence" value="ECO:0007669"/>
    <property type="project" value="UniProtKB-UniRule"/>
</dbReference>
<dbReference type="GO" id="GO:0004497">
    <property type="term" value="F:monooxygenase activity"/>
    <property type="evidence" value="ECO:0007669"/>
    <property type="project" value="UniProtKB-KW"/>
</dbReference>
<dbReference type="GO" id="GO:0016984">
    <property type="term" value="F:ribulose-bisphosphate carboxylase activity"/>
    <property type="evidence" value="ECO:0007669"/>
    <property type="project" value="UniProtKB-UniRule"/>
</dbReference>
<dbReference type="GO" id="GO:0009853">
    <property type="term" value="P:photorespiration"/>
    <property type="evidence" value="ECO:0007669"/>
    <property type="project" value="UniProtKB-KW"/>
</dbReference>
<dbReference type="GO" id="GO:0019253">
    <property type="term" value="P:reductive pentose-phosphate cycle"/>
    <property type="evidence" value="ECO:0007669"/>
    <property type="project" value="UniProtKB-UniRule"/>
</dbReference>
<dbReference type="CDD" id="cd08212">
    <property type="entry name" value="RuBisCO_large_I"/>
    <property type="match status" value="1"/>
</dbReference>
<dbReference type="FunFam" id="3.20.20.110:FF:000001">
    <property type="entry name" value="Ribulose bisphosphate carboxylase large chain"/>
    <property type="match status" value="1"/>
</dbReference>
<dbReference type="FunFam" id="3.30.70.150:FF:000001">
    <property type="entry name" value="Ribulose bisphosphate carboxylase large chain"/>
    <property type="match status" value="1"/>
</dbReference>
<dbReference type="Gene3D" id="3.20.20.110">
    <property type="entry name" value="Ribulose bisphosphate carboxylase, large subunit, C-terminal domain"/>
    <property type="match status" value="1"/>
</dbReference>
<dbReference type="Gene3D" id="3.30.70.150">
    <property type="entry name" value="RuBisCO large subunit, N-terminal domain"/>
    <property type="match status" value="1"/>
</dbReference>
<dbReference type="HAMAP" id="MF_01338">
    <property type="entry name" value="RuBisCO_L_type1"/>
    <property type="match status" value="1"/>
</dbReference>
<dbReference type="InterPro" id="IPR033966">
    <property type="entry name" value="RuBisCO"/>
</dbReference>
<dbReference type="InterPro" id="IPR020878">
    <property type="entry name" value="RuBisCo_large_chain_AS"/>
</dbReference>
<dbReference type="InterPro" id="IPR000685">
    <property type="entry name" value="RuBisCO_lsu_C"/>
</dbReference>
<dbReference type="InterPro" id="IPR036376">
    <property type="entry name" value="RuBisCO_lsu_C_sf"/>
</dbReference>
<dbReference type="InterPro" id="IPR017443">
    <property type="entry name" value="RuBisCO_lsu_fd_N"/>
</dbReference>
<dbReference type="InterPro" id="IPR036422">
    <property type="entry name" value="RuBisCO_lsu_N_sf"/>
</dbReference>
<dbReference type="InterPro" id="IPR020888">
    <property type="entry name" value="RuBisCO_lsuI"/>
</dbReference>
<dbReference type="NCBIfam" id="NF003252">
    <property type="entry name" value="PRK04208.1"/>
    <property type="match status" value="1"/>
</dbReference>
<dbReference type="PANTHER" id="PTHR42704">
    <property type="entry name" value="RIBULOSE BISPHOSPHATE CARBOXYLASE"/>
    <property type="match status" value="1"/>
</dbReference>
<dbReference type="PANTHER" id="PTHR42704:SF15">
    <property type="entry name" value="RIBULOSE BISPHOSPHATE CARBOXYLASE LARGE CHAIN"/>
    <property type="match status" value="1"/>
</dbReference>
<dbReference type="Pfam" id="PF00016">
    <property type="entry name" value="RuBisCO_large"/>
    <property type="match status" value="1"/>
</dbReference>
<dbReference type="Pfam" id="PF02788">
    <property type="entry name" value="RuBisCO_large_N"/>
    <property type="match status" value="1"/>
</dbReference>
<dbReference type="SFLD" id="SFLDG01052">
    <property type="entry name" value="RuBisCO"/>
    <property type="match status" value="1"/>
</dbReference>
<dbReference type="SFLD" id="SFLDS00014">
    <property type="entry name" value="RuBisCO"/>
    <property type="match status" value="1"/>
</dbReference>
<dbReference type="SFLD" id="SFLDG00301">
    <property type="entry name" value="RuBisCO-like_proteins"/>
    <property type="match status" value="1"/>
</dbReference>
<dbReference type="SUPFAM" id="SSF51649">
    <property type="entry name" value="RuBisCo, C-terminal domain"/>
    <property type="match status" value="1"/>
</dbReference>
<dbReference type="SUPFAM" id="SSF54966">
    <property type="entry name" value="RuBisCO, large subunit, small (N-terminal) domain"/>
    <property type="match status" value="1"/>
</dbReference>
<dbReference type="PROSITE" id="PS00157">
    <property type="entry name" value="RUBISCO_LARGE"/>
    <property type="match status" value="1"/>
</dbReference>
<comment type="function">
    <text evidence="1">RuBisCO catalyzes two reactions: the carboxylation of D-ribulose 1,5-bisphosphate, the primary event in carbon dioxide fixation, as well as the oxidative fragmentation of the pentose substrate in the photorespiration process. Both reactions occur simultaneously and in competition at the same active site.</text>
</comment>
<comment type="catalytic activity">
    <reaction evidence="1">
        <text>2 (2R)-3-phosphoglycerate + 2 H(+) = D-ribulose 1,5-bisphosphate + CO2 + H2O</text>
        <dbReference type="Rhea" id="RHEA:23124"/>
        <dbReference type="ChEBI" id="CHEBI:15377"/>
        <dbReference type="ChEBI" id="CHEBI:15378"/>
        <dbReference type="ChEBI" id="CHEBI:16526"/>
        <dbReference type="ChEBI" id="CHEBI:57870"/>
        <dbReference type="ChEBI" id="CHEBI:58272"/>
        <dbReference type="EC" id="4.1.1.39"/>
    </reaction>
</comment>
<comment type="catalytic activity">
    <reaction evidence="1">
        <text>D-ribulose 1,5-bisphosphate + O2 = 2-phosphoglycolate + (2R)-3-phosphoglycerate + 2 H(+)</text>
        <dbReference type="Rhea" id="RHEA:36631"/>
        <dbReference type="ChEBI" id="CHEBI:15378"/>
        <dbReference type="ChEBI" id="CHEBI:15379"/>
        <dbReference type="ChEBI" id="CHEBI:57870"/>
        <dbReference type="ChEBI" id="CHEBI:58033"/>
        <dbReference type="ChEBI" id="CHEBI:58272"/>
    </reaction>
</comment>
<comment type="cofactor">
    <cofactor evidence="1">
        <name>Mg(2+)</name>
        <dbReference type="ChEBI" id="CHEBI:18420"/>
    </cofactor>
    <text evidence="1">Binds 1 Mg(2+) ion per subunit.</text>
</comment>
<comment type="subunit">
    <text evidence="1">Heterohexadecamer of 8 large chains and 8 small chains; disulfide-linked. The disulfide link is formed within the large subunit homodimers.</text>
</comment>
<comment type="subcellular location">
    <subcellularLocation>
        <location>Plastid</location>
        <location>Chloroplast</location>
    </subcellularLocation>
</comment>
<comment type="PTM">
    <text evidence="1">The disulfide bond which can form in the large chain dimeric partners within the hexadecamer appears to be associated with oxidative stress and protein turnover.</text>
</comment>
<comment type="miscellaneous">
    <text evidence="1">The basic functional RuBisCO is composed of a large chain homodimer in a 'head-to-tail' conformation. In form I RuBisCO this homodimer is arranged in a barrel-like tetramer with the small subunits forming a tetrameric 'cap' on each end of the 'barrel'.</text>
</comment>
<comment type="similarity">
    <text evidence="1">Belongs to the RuBisCO large chain family. Type I subfamily.</text>
</comment>
<sequence length="475" mass="52675">MSPQTETKASVGFKAGVKDYKLTYYTPEYQTLDTDILAAFRVTPQPGVPPEEAGAAVAAESSTGTWTTVWTDGLTSLDRYKGRCYHIDPVPGEENQYICYVAYPLDLFEEGSVTNMFTSIVGNVFGFKALRALRLEDLRIPVAYIKTFQGPPHGIQVERDKLNKYGRPLLGCTIKPKLGLSAKNYGRAVYECLRGGLDFTKDDENVNSQPFMRWRDRFLFCAEAIYKAQAETGEIKGHYLNATAGTCEEMIKRAVFARELGVPIVMHDYITGGFTANTSLAHYCRDNGLLLHIHRAMHAVIDRQKNHGMHFRVLAKALRLSGGDHIHAGTVVGKLEGEREITLGFVDLLRDDFTEKDRSRGIYFTQSWVSTPGVLPVASGGIHVWHMPALTEIFGDDSVLQFGGGTLGHPWGNAPGAVANRVALEACVQARNEGRDLAREGNTIIREACKWSPELAAACEVWKEIKFEFQAMDTI</sequence>
<organism>
    <name type="scientific">Stellaria media</name>
    <name type="common">Common chickweed</name>
    <name type="synonym">Alsine media</name>
    <dbReference type="NCBI Taxonomy" id="13274"/>
    <lineage>
        <taxon>Eukaryota</taxon>
        <taxon>Viridiplantae</taxon>
        <taxon>Streptophyta</taxon>
        <taxon>Embryophyta</taxon>
        <taxon>Tracheophyta</taxon>
        <taxon>Spermatophyta</taxon>
        <taxon>Magnoliopsida</taxon>
        <taxon>eudicotyledons</taxon>
        <taxon>Gunneridae</taxon>
        <taxon>Pentapetalae</taxon>
        <taxon>Caryophyllales</taxon>
        <taxon>Caryophyllaceae</taxon>
        <taxon>Alsineae</taxon>
        <taxon>Stellaria</taxon>
    </lineage>
</organism>
<accession>P46820</accession>
<geneLocation type="chloroplast"/>
<reference key="1">
    <citation type="submission" date="1994-01" db="EMBL/GenBank/DDBJ databases">
        <title>Systematics of Caryophyllales using large subunit of ribulose-1, 5-bisphosphate carboxylase/oxygenase (rbcL) gene sequence data.</title>
        <authorList>
            <person name="Rettig J.H."/>
            <person name="Wilson H.D."/>
            <person name="Manhart J.R."/>
        </authorList>
    </citation>
    <scope>NUCLEOTIDE SEQUENCE [GENOMIC DNA]</scope>
</reference>
<proteinExistence type="inferred from homology"/>
<feature type="propeptide" id="PRO_0000031421" evidence="1">
    <location>
        <begin position="1"/>
        <end position="2"/>
    </location>
</feature>
<feature type="chain" id="PRO_0000031422" description="Ribulose bisphosphate carboxylase large chain">
    <location>
        <begin position="3"/>
        <end position="475"/>
    </location>
</feature>
<feature type="active site" description="Proton acceptor" evidence="1">
    <location>
        <position position="175"/>
    </location>
</feature>
<feature type="active site" description="Proton acceptor" evidence="1">
    <location>
        <position position="294"/>
    </location>
</feature>
<feature type="binding site" description="in homodimeric partner" evidence="1">
    <location>
        <position position="123"/>
    </location>
    <ligand>
        <name>substrate</name>
    </ligand>
</feature>
<feature type="binding site" evidence="1">
    <location>
        <position position="173"/>
    </location>
    <ligand>
        <name>substrate</name>
    </ligand>
</feature>
<feature type="binding site" evidence="1">
    <location>
        <position position="177"/>
    </location>
    <ligand>
        <name>substrate</name>
    </ligand>
</feature>
<feature type="binding site" description="via carbamate group" evidence="1">
    <location>
        <position position="201"/>
    </location>
    <ligand>
        <name>Mg(2+)</name>
        <dbReference type="ChEBI" id="CHEBI:18420"/>
    </ligand>
</feature>
<feature type="binding site" evidence="1">
    <location>
        <position position="203"/>
    </location>
    <ligand>
        <name>Mg(2+)</name>
        <dbReference type="ChEBI" id="CHEBI:18420"/>
    </ligand>
</feature>
<feature type="binding site" evidence="1">
    <location>
        <position position="204"/>
    </location>
    <ligand>
        <name>Mg(2+)</name>
        <dbReference type="ChEBI" id="CHEBI:18420"/>
    </ligand>
</feature>
<feature type="binding site" evidence="1">
    <location>
        <position position="295"/>
    </location>
    <ligand>
        <name>substrate</name>
    </ligand>
</feature>
<feature type="binding site" evidence="1">
    <location>
        <position position="327"/>
    </location>
    <ligand>
        <name>substrate</name>
    </ligand>
</feature>
<feature type="binding site" evidence="1">
    <location>
        <position position="379"/>
    </location>
    <ligand>
        <name>substrate</name>
    </ligand>
</feature>
<feature type="site" description="Transition state stabilizer" evidence="1">
    <location>
        <position position="334"/>
    </location>
</feature>
<feature type="modified residue" description="N-acetylproline" evidence="1">
    <location>
        <position position="3"/>
    </location>
</feature>
<feature type="modified residue" description="N6,N6,N6-trimethyllysine" evidence="1">
    <location>
        <position position="14"/>
    </location>
</feature>
<feature type="modified residue" description="N6-carboxylysine" evidence="1">
    <location>
        <position position="201"/>
    </location>
</feature>
<feature type="disulfide bond" description="Interchain; in linked form" evidence="1">
    <location>
        <position position="247"/>
    </location>
</feature>
<gene>
    <name evidence="1" type="primary">rbcL</name>
</gene>
<name>RBL_STEME</name>
<protein>
    <recommendedName>
        <fullName evidence="1">Ribulose bisphosphate carboxylase large chain</fullName>
        <shortName evidence="1">RuBisCO large subunit</shortName>
        <ecNumber evidence="1">4.1.1.39</ecNumber>
    </recommendedName>
</protein>
<evidence type="ECO:0000255" key="1">
    <source>
        <dbReference type="HAMAP-Rule" id="MF_01338"/>
    </source>
</evidence>